<gene>
    <name evidence="1" type="primary">csrA</name>
    <name type="ordered locus">SDY_2892</name>
</gene>
<comment type="function">
    <text evidence="1">A key translational regulator that binds mRNA to regulate translation initiation and/or mRNA stability. Mediates global changes in gene expression, shifting from rapid growth to stress survival by linking envelope stress, the stringent response and the catabolite repression systems. Usually binds in the 5'-UTR; binding at or near the Shine-Dalgarno sequence prevents ribosome-binding, repressing translation, binding elsewhere in the 5'-UTR can activate translation and/or stabilize the mRNA. Its function is antagonized by small RNA(s).</text>
</comment>
<comment type="subunit">
    <text evidence="1">Homodimer; the beta-strands of each monomer intercalate to form a hydrophobic core, while the alpha-helices form wings that extend away from the core.</text>
</comment>
<comment type="subcellular location">
    <subcellularLocation>
        <location evidence="1">Cytoplasm</location>
    </subcellularLocation>
</comment>
<comment type="similarity">
    <text evidence="1">Belongs to the CsrA/RsmA family.</text>
</comment>
<protein>
    <recommendedName>
        <fullName evidence="1">Translational regulator CsrA</fullName>
    </recommendedName>
    <alternativeName>
        <fullName evidence="1">Carbon storage regulator</fullName>
    </alternativeName>
</protein>
<name>CSRA_SHIDS</name>
<sequence>MLILTRRVGETLMIGDEVTVTVLGVKGNQVRIGVNAPKEVSVHREEIYQRIQAEKSQQSSY</sequence>
<dbReference type="EMBL" id="CP000034">
    <property type="protein sequence ID" value="ABB62923.1"/>
    <property type="molecule type" value="Genomic_DNA"/>
</dbReference>
<dbReference type="RefSeq" id="WP_000906486.1">
    <property type="nucleotide sequence ID" value="NC_007606.1"/>
</dbReference>
<dbReference type="RefSeq" id="YP_404414.1">
    <property type="nucleotide sequence ID" value="NC_007606.1"/>
</dbReference>
<dbReference type="SMR" id="Q32CN2"/>
<dbReference type="STRING" id="300267.SDY_2892"/>
<dbReference type="EnsemblBacteria" id="ABB62923">
    <property type="protein sequence ID" value="ABB62923"/>
    <property type="gene ID" value="SDY_2892"/>
</dbReference>
<dbReference type="GeneID" id="98389839"/>
<dbReference type="KEGG" id="sdy:SDY_2892"/>
<dbReference type="PATRIC" id="fig|300267.13.peg.3473"/>
<dbReference type="HOGENOM" id="CLU_164837_2_1_6"/>
<dbReference type="PRO" id="PR:Q32CN2"/>
<dbReference type="Proteomes" id="UP000002716">
    <property type="component" value="Chromosome"/>
</dbReference>
<dbReference type="GO" id="GO:0005829">
    <property type="term" value="C:cytosol"/>
    <property type="evidence" value="ECO:0007669"/>
    <property type="project" value="TreeGrafter"/>
</dbReference>
<dbReference type="GO" id="GO:0048027">
    <property type="term" value="F:mRNA 5'-UTR binding"/>
    <property type="evidence" value="ECO:0007669"/>
    <property type="project" value="UniProtKB-UniRule"/>
</dbReference>
<dbReference type="GO" id="GO:0006402">
    <property type="term" value="P:mRNA catabolic process"/>
    <property type="evidence" value="ECO:0007669"/>
    <property type="project" value="InterPro"/>
</dbReference>
<dbReference type="GO" id="GO:0045947">
    <property type="term" value="P:negative regulation of translational initiation"/>
    <property type="evidence" value="ECO:0007669"/>
    <property type="project" value="UniProtKB-UniRule"/>
</dbReference>
<dbReference type="GO" id="GO:0045948">
    <property type="term" value="P:positive regulation of translational initiation"/>
    <property type="evidence" value="ECO:0007669"/>
    <property type="project" value="UniProtKB-UniRule"/>
</dbReference>
<dbReference type="GO" id="GO:0006109">
    <property type="term" value="P:regulation of carbohydrate metabolic process"/>
    <property type="evidence" value="ECO:0007669"/>
    <property type="project" value="UniProtKB-UniRule"/>
</dbReference>
<dbReference type="FunFam" id="2.60.40.4380:FF:000001">
    <property type="entry name" value="Translational regulator CsrA"/>
    <property type="match status" value="1"/>
</dbReference>
<dbReference type="Gene3D" id="2.60.40.4380">
    <property type="entry name" value="Translational regulator CsrA"/>
    <property type="match status" value="1"/>
</dbReference>
<dbReference type="HAMAP" id="MF_00167">
    <property type="entry name" value="CsrA"/>
    <property type="match status" value="1"/>
</dbReference>
<dbReference type="InterPro" id="IPR003751">
    <property type="entry name" value="CsrA"/>
</dbReference>
<dbReference type="InterPro" id="IPR036107">
    <property type="entry name" value="CsrA_sf"/>
</dbReference>
<dbReference type="NCBIfam" id="TIGR00202">
    <property type="entry name" value="csrA"/>
    <property type="match status" value="1"/>
</dbReference>
<dbReference type="NCBIfam" id="NF002469">
    <property type="entry name" value="PRK01712.1"/>
    <property type="match status" value="1"/>
</dbReference>
<dbReference type="PANTHER" id="PTHR34984">
    <property type="entry name" value="CARBON STORAGE REGULATOR"/>
    <property type="match status" value="1"/>
</dbReference>
<dbReference type="PANTHER" id="PTHR34984:SF1">
    <property type="entry name" value="CARBON STORAGE REGULATOR"/>
    <property type="match status" value="1"/>
</dbReference>
<dbReference type="Pfam" id="PF02599">
    <property type="entry name" value="CsrA"/>
    <property type="match status" value="1"/>
</dbReference>
<dbReference type="SUPFAM" id="SSF117130">
    <property type="entry name" value="CsrA-like"/>
    <property type="match status" value="1"/>
</dbReference>
<proteinExistence type="inferred from homology"/>
<keyword id="KW-0010">Activator</keyword>
<keyword id="KW-0963">Cytoplasm</keyword>
<keyword id="KW-1185">Reference proteome</keyword>
<keyword id="KW-0678">Repressor</keyword>
<keyword id="KW-0694">RNA-binding</keyword>
<keyword id="KW-0810">Translation regulation</keyword>
<feature type="chain" id="PRO_1000023427" description="Translational regulator CsrA">
    <location>
        <begin position="1"/>
        <end position="61"/>
    </location>
</feature>
<organism>
    <name type="scientific">Shigella dysenteriae serotype 1 (strain Sd197)</name>
    <dbReference type="NCBI Taxonomy" id="300267"/>
    <lineage>
        <taxon>Bacteria</taxon>
        <taxon>Pseudomonadati</taxon>
        <taxon>Pseudomonadota</taxon>
        <taxon>Gammaproteobacteria</taxon>
        <taxon>Enterobacterales</taxon>
        <taxon>Enterobacteriaceae</taxon>
        <taxon>Shigella</taxon>
    </lineage>
</organism>
<accession>Q32CN2</accession>
<evidence type="ECO:0000255" key="1">
    <source>
        <dbReference type="HAMAP-Rule" id="MF_00167"/>
    </source>
</evidence>
<reference key="1">
    <citation type="journal article" date="2005" name="Nucleic Acids Res.">
        <title>Genome dynamics and diversity of Shigella species, the etiologic agents of bacillary dysentery.</title>
        <authorList>
            <person name="Yang F."/>
            <person name="Yang J."/>
            <person name="Zhang X."/>
            <person name="Chen L."/>
            <person name="Jiang Y."/>
            <person name="Yan Y."/>
            <person name="Tang X."/>
            <person name="Wang J."/>
            <person name="Xiong Z."/>
            <person name="Dong J."/>
            <person name="Xue Y."/>
            <person name="Zhu Y."/>
            <person name="Xu X."/>
            <person name="Sun L."/>
            <person name="Chen S."/>
            <person name="Nie H."/>
            <person name="Peng J."/>
            <person name="Xu J."/>
            <person name="Wang Y."/>
            <person name="Yuan Z."/>
            <person name="Wen Y."/>
            <person name="Yao Z."/>
            <person name="Shen Y."/>
            <person name="Qiang B."/>
            <person name="Hou Y."/>
            <person name="Yu J."/>
            <person name="Jin Q."/>
        </authorList>
    </citation>
    <scope>NUCLEOTIDE SEQUENCE [LARGE SCALE GENOMIC DNA]</scope>
    <source>
        <strain>Sd197</strain>
    </source>
</reference>